<proteinExistence type="inferred from homology"/>
<sequence length="355" mass="37287">MAQPTFFTKPPATALADIATLTKALLVDPTRGDHVITGLASLDEAGPMHLAFFDNLKYADQLKATRAGACLVSPRFEAQVPAHVAVLRAAQPFRAFVRIAREWHGDALRPQSWVGNDGIAPSAIIDPTARLEDGVIVDPLAVIGADVEIGSGTVVGVGAVIGPGVKIGRDCNVGARTAIQCALIGNDVLIHPGCSIGQDGYGFIFFGPEGHLKVPQTGRVLIQNNVEVGAGTTIDRGSLRDTVIGEGTKIDNQVQIGHNVTIGRNCLLAAQIGLAGSLTIGDNVALGAKVGINNHLKIGDGAQVTAMSGVKDDIPPNGRWGGFFAKPTKQWFKEIIAVERLVRDSRADPKDEGRE</sequence>
<keyword id="KW-0012">Acyltransferase</keyword>
<keyword id="KW-0441">Lipid A biosynthesis</keyword>
<keyword id="KW-0444">Lipid biosynthesis</keyword>
<keyword id="KW-0443">Lipid metabolism</keyword>
<keyword id="KW-1185">Reference proteome</keyword>
<keyword id="KW-0677">Repeat</keyword>
<keyword id="KW-0808">Transferase</keyword>
<organism>
    <name type="scientific">Bradyrhizobium diazoefficiens (strain JCM 10833 / BCRC 13528 / IAM 13628 / NBRC 14792 / USDA 110)</name>
    <dbReference type="NCBI Taxonomy" id="224911"/>
    <lineage>
        <taxon>Bacteria</taxon>
        <taxon>Pseudomonadati</taxon>
        <taxon>Pseudomonadota</taxon>
        <taxon>Alphaproteobacteria</taxon>
        <taxon>Hyphomicrobiales</taxon>
        <taxon>Nitrobacteraceae</taxon>
        <taxon>Bradyrhizobium</taxon>
    </lineage>
</organism>
<evidence type="ECO:0000255" key="1">
    <source>
        <dbReference type="HAMAP-Rule" id="MF_00523"/>
    </source>
</evidence>
<comment type="function">
    <text evidence="1">Catalyzes the N-acylation of UDP-3-O-acylglucosamine using 3-hydroxyacyl-ACP as the acyl donor. Is involved in the biosynthesis of lipid A, a phosphorylated glycolipid that anchors the lipopolysaccharide to the outer membrane of the cell.</text>
</comment>
<comment type="catalytic activity">
    <reaction evidence="1">
        <text>a UDP-3-O-[(3R)-3-hydroxyacyl]-alpha-D-glucosamine + a (3R)-hydroxyacyl-[ACP] = a UDP-2-N,3-O-bis[(3R)-3-hydroxyacyl]-alpha-D-glucosamine + holo-[ACP] + H(+)</text>
        <dbReference type="Rhea" id="RHEA:53836"/>
        <dbReference type="Rhea" id="RHEA-COMP:9685"/>
        <dbReference type="Rhea" id="RHEA-COMP:9945"/>
        <dbReference type="ChEBI" id="CHEBI:15378"/>
        <dbReference type="ChEBI" id="CHEBI:64479"/>
        <dbReference type="ChEBI" id="CHEBI:78827"/>
        <dbReference type="ChEBI" id="CHEBI:137740"/>
        <dbReference type="ChEBI" id="CHEBI:137748"/>
        <dbReference type="EC" id="2.3.1.191"/>
    </reaction>
</comment>
<comment type="pathway">
    <text evidence="1">Bacterial outer membrane biogenesis; LPS lipid A biosynthesis.</text>
</comment>
<comment type="subunit">
    <text evidence="1">Homotrimer.</text>
</comment>
<comment type="similarity">
    <text evidence="1">Belongs to the transferase hexapeptide repeat family. LpxD subfamily.</text>
</comment>
<feature type="chain" id="PRO_0000059651" description="UDP-3-O-acylglucosamine N-acyltransferase">
    <location>
        <begin position="1"/>
        <end position="355"/>
    </location>
</feature>
<feature type="active site" description="Proton acceptor" evidence="1">
    <location>
        <position position="258"/>
    </location>
</feature>
<gene>
    <name evidence="1" type="primary">lpxD</name>
    <name type="ordered locus">bll4852</name>
</gene>
<accession>Q89KQ2</accession>
<dbReference type="EC" id="2.3.1.191" evidence="1"/>
<dbReference type="EMBL" id="BA000040">
    <property type="protein sequence ID" value="BAC50117.1"/>
    <property type="molecule type" value="Genomic_DNA"/>
</dbReference>
<dbReference type="RefSeq" id="NP_771492.1">
    <property type="nucleotide sequence ID" value="NC_004463.1"/>
</dbReference>
<dbReference type="RefSeq" id="WP_011087620.1">
    <property type="nucleotide sequence ID" value="NC_004463.1"/>
</dbReference>
<dbReference type="SMR" id="Q89KQ2"/>
<dbReference type="FunCoup" id="Q89KQ2">
    <property type="interactions" value="452"/>
</dbReference>
<dbReference type="STRING" id="224911.AAV28_21570"/>
<dbReference type="EnsemblBacteria" id="BAC50117">
    <property type="protein sequence ID" value="BAC50117"/>
    <property type="gene ID" value="BAC50117"/>
</dbReference>
<dbReference type="GeneID" id="46491855"/>
<dbReference type="KEGG" id="bja:bll4852"/>
<dbReference type="PATRIC" id="fig|224911.44.peg.4697"/>
<dbReference type="eggNOG" id="COG1044">
    <property type="taxonomic scope" value="Bacteria"/>
</dbReference>
<dbReference type="HOGENOM" id="CLU_049865_0_2_5"/>
<dbReference type="InParanoid" id="Q89KQ2"/>
<dbReference type="OrthoDB" id="9784739at2"/>
<dbReference type="PhylomeDB" id="Q89KQ2"/>
<dbReference type="UniPathway" id="UPA00973"/>
<dbReference type="Proteomes" id="UP000002526">
    <property type="component" value="Chromosome"/>
</dbReference>
<dbReference type="GO" id="GO:0016020">
    <property type="term" value="C:membrane"/>
    <property type="evidence" value="ECO:0007669"/>
    <property type="project" value="GOC"/>
</dbReference>
<dbReference type="GO" id="GO:0016410">
    <property type="term" value="F:N-acyltransferase activity"/>
    <property type="evidence" value="ECO:0007669"/>
    <property type="project" value="InterPro"/>
</dbReference>
<dbReference type="GO" id="GO:0009245">
    <property type="term" value="P:lipid A biosynthetic process"/>
    <property type="evidence" value="ECO:0007669"/>
    <property type="project" value="UniProtKB-UniRule"/>
</dbReference>
<dbReference type="CDD" id="cd03352">
    <property type="entry name" value="LbH_LpxD"/>
    <property type="match status" value="1"/>
</dbReference>
<dbReference type="Gene3D" id="2.160.10.10">
    <property type="entry name" value="Hexapeptide repeat proteins"/>
    <property type="match status" value="1"/>
</dbReference>
<dbReference type="Gene3D" id="3.40.1390.10">
    <property type="entry name" value="MurE/MurF, N-terminal domain"/>
    <property type="match status" value="1"/>
</dbReference>
<dbReference type="HAMAP" id="MF_00523">
    <property type="entry name" value="LpxD"/>
    <property type="match status" value="1"/>
</dbReference>
<dbReference type="InterPro" id="IPR001451">
    <property type="entry name" value="Hexapep"/>
</dbReference>
<dbReference type="InterPro" id="IPR018357">
    <property type="entry name" value="Hexapep_transf_CS"/>
</dbReference>
<dbReference type="InterPro" id="IPR007691">
    <property type="entry name" value="LpxD"/>
</dbReference>
<dbReference type="InterPro" id="IPR011004">
    <property type="entry name" value="Trimer_LpxA-like_sf"/>
</dbReference>
<dbReference type="InterPro" id="IPR020573">
    <property type="entry name" value="UDP_GlcNAc_AcTrfase_non-rep"/>
</dbReference>
<dbReference type="NCBIfam" id="TIGR01853">
    <property type="entry name" value="lipid_A_lpxD"/>
    <property type="match status" value="1"/>
</dbReference>
<dbReference type="NCBIfam" id="NF002060">
    <property type="entry name" value="PRK00892.1"/>
    <property type="match status" value="1"/>
</dbReference>
<dbReference type="PANTHER" id="PTHR43378">
    <property type="entry name" value="UDP-3-O-ACYLGLUCOSAMINE N-ACYLTRANSFERASE"/>
    <property type="match status" value="1"/>
</dbReference>
<dbReference type="PANTHER" id="PTHR43378:SF2">
    <property type="entry name" value="UDP-3-O-ACYLGLUCOSAMINE N-ACYLTRANSFERASE 1, MITOCHONDRIAL-RELATED"/>
    <property type="match status" value="1"/>
</dbReference>
<dbReference type="Pfam" id="PF00132">
    <property type="entry name" value="Hexapep"/>
    <property type="match status" value="2"/>
</dbReference>
<dbReference type="Pfam" id="PF04613">
    <property type="entry name" value="LpxD"/>
    <property type="match status" value="1"/>
</dbReference>
<dbReference type="SUPFAM" id="SSF51161">
    <property type="entry name" value="Trimeric LpxA-like enzymes"/>
    <property type="match status" value="1"/>
</dbReference>
<dbReference type="PROSITE" id="PS00101">
    <property type="entry name" value="HEXAPEP_TRANSFERASES"/>
    <property type="match status" value="2"/>
</dbReference>
<protein>
    <recommendedName>
        <fullName evidence="1">UDP-3-O-acylglucosamine N-acyltransferase</fullName>
        <ecNumber evidence="1">2.3.1.191</ecNumber>
    </recommendedName>
</protein>
<reference key="1">
    <citation type="journal article" date="2002" name="DNA Res.">
        <title>Complete genomic sequence of nitrogen-fixing symbiotic bacterium Bradyrhizobium japonicum USDA110.</title>
        <authorList>
            <person name="Kaneko T."/>
            <person name="Nakamura Y."/>
            <person name="Sato S."/>
            <person name="Minamisawa K."/>
            <person name="Uchiumi T."/>
            <person name="Sasamoto S."/>
            <person name="Watanabe A."/>
            <person name="Idesawa K."/>
            <person name="Iriguchi M."/>
            <person name="Kawashima K."/>
            <person name="Kohara M."/>
            <person name="Matsumoto M."/>
            <person name="Shimpo S."/>
            <person name="Tsuruoka H."/>
            <person name="Wada T."/>
            <person name="Yamada M."/>
            <person name="Tabata S."/>
        </authorList>
    </citation>
    <scope>NUCLEOTIDE SEQUENCE [LARGE SCALE GENOMIC DNA]</scope>
    <source>
        <strain>JCM 10833 / BCRC 13528 / IAM 13628 / NBRC 14792 / USDA 110</strain>
    </source>
</reference>
<name>LPXD_BRADU</name>